<feature type="chain" id="PRO_1000080579" description="Na(+)-translocating NADH-quinone reductase subunit F">
    <location>
        <begin position="1"/>
        <end position="407"/>
    </location>
</feature>
<feature type="transmembrane region" description="Helical" evidence="1">
    <location>
        <begin position="3"/>
        <end position="23"/>
    </location>
</feature>
<feature type="domain" description="2Fe-2S ferredoxin-type" evidence="1">
    <location>
        <begin position="32"/>
        <end position="126"/>
    </location>
</feature>
<feature type="domain" description="FAD-binding FR-type" evidence="1">
    <location>
        <begin position="129"/>
        <end position="269"/>
    </location>
</feature>
<feature type="binding site" evidence="1">
    <location>
        <position position="69"/>
    </location>
    <ligand>
        <name>[2Fe-2S] cluster</name>
        <dbReference type="ChEBI" id="CHEBI:190135"/>
    </ligand>
</feature>
<feature type="binding site" evidence="1">
    <location>
        <position position="75"/>
    </location>
    <ligand>
        <name>[2Fe-2S] cluster</name>
        <dbReference type="ChEBI" id="CHEBI:190135"/>
    </ligand>
</feature>
<feature type="binding site" evidence="1">
    <location>
        <position position="78"/>
    </location>
    <ligand>
        <name>[2Fe-2S] cluster</name>
        <dbReference type="ChEBI" id="CHEBI:190135"/>
    </ligand>
</feature>
<feature type="binding site" evidence="1">
    <location>
        <position position="110"/>
    </location>
    <ligand>
        <name>[2Fe-2S] cluster</name>
        <dbReference type="ChEBI" id="CHEBI:190135"/>
    </ligand>
</feature>
<evidence type="ECO:0000255" key="1">
    <source>
        <dbReference type="HAMAP-Rule" id="MF_00430"/>
    </source>
</evidence>
<name>NQRF_HISS1</name>
<proteinExistence type="inferred from homology"/>
<dbReference type="EC" id="7.2.1.1" evidence="1"/>
<dbReference type="EMBL" id="CP000436">
    <property type="protein sequence ID" value="ABI25956.1"/>
    <property type="molecule type" value="Genomic_DNA"/>
</dbReference>
<dbReference type="SMR" id="Q0I5Y1"/>
<dbReference type="KEGG" id="hso:HS_1688"/>
<dbReference type="eggNOG" id="COG2871">
    <property type="taxonomic scope" value="Bacteria"/>
</dbReference>
<dbReference type="HOGENOM" id="CLU_003827_7_2_6"/>
<dbReference type="GO" id="GO:0005886">
    <property type="term" value="C:plasma membrane"/>
    <property type="evidence" value="ECO:0007669"/>
    <property type="project" value="UniProtKB-SubCell"/>
</dbReference>
<dbReference type="GO" id="GO:0051537">
    <property type="term" value="F:2 iron, 2 sulfur cluster binding"/>
    <property type="evidence" value="ECO:0007669"/>
    <property type="project" value="UniProtKB-KW"/>
</dbReference>
<dbReference type="GO" id="GO:0009055">
    <property type="term" value="F:electron transfer activity"/>
    <property type="evidence" value="ECO:0007669"/>
    <property type="project" value="UniProtKB-UniRule"/>
</dbReference>
<dbReference type="GO" id="GO:0046872">
    <property type="term" value="F:metal ion binding"/>
    <property type="evidence" value="ECO:0007669"/>
    <property type="project" value="UniProtKB-KW"/>
</dbReference>
<dbReference type="GO" id="GO:0016655">
    <property type="term" value="F:oxidoreductase activity, acting on NAD(P)H, quinone or similar compound as acceptor"/>
    <property type="evidence" value="ECO:0007669"/>
    <property type="project" value="InterPro"/>
</dbReference>
<dbReference type="GO" id="GO:0006814">
    <property type="term" value="P:sodium ion transport"/>
    <property type="evidence" value="ECO:0007669"/>
    <property type="project" value="UniProtKB-UniRule"/>
</dbReference>
<dbReference type="CDD" id="cd00207">
    <property type="entry name" value="fer2"/>
    <property type="match status" value="1"/>
</dbReference>
<dbReference type="CDD" id="cd06188">
    <property type="entry name" value="NADH_quinone_reductase"/>
    <property type="match status" value="1"/>
</dbReference>
<dbReference type="FunFam" id="2.40.30.10:FF:000064">
    <property type="entry name" value="Na(+)-translocating NADH-quinone reductase subunit F"/>
    <property type="match status" value="1"/>
</dbReference>
<dbReference type="FunFam" id="3.40.50.80:FF:000014">
    <property type="entry name" value="Na(+)-translocating NADH-quinone reductase subunit F"/>
    <property type="match status" value="1"/>
</dbReference>
<dbReference type="Gene3D" id="3.10.20.30">
    <property type="match status" value="1"/>
</dbReference>
<dbReference type="Gene3D" id="3.40.50.80">
    <property type="entry name" value="Nucleotide-binding domain of ferredoxin-NADP reductase (FNR) module"/>
    <property type="match status" value="1"/>
</dbReference>
<dbReference type="Gene3D" id="2.40.30.10">
    <property type="entry name" value="Translation factors"/>
    <property type="match status" value="1"/>
</dbReference>
<dbReference type="HAMAP" id="MF_00430">
    <property type="entry name" value="NqrF"/>
    <property type="match status" value="1"/>
</dbReference>
<dbReference type="InterPro" id="IPR036010">
    <property type="entry name" value="2Fe-2S_ferredoxin-like_sf"/>
</dbReference>
<dbReference type="InterPro" id="IPR001041">
    <property type="entry name" value="2Fe-2S_ferredoxin-type"/>
</dbReference>
<dbReference type="InterPro" id="IPR012675">
    <property type="entry name" value="Beta-grasp_dom_sf"/>
</dbReference>
<dbReference type="InterPro" id="IPR008333">
    <property type="entry name" value="Cbr1-like_FAD-bd_dom"/>
</dbReference>
<dbReference type="InterPro" id="IPR017927">
    <property type="entry name" value="FAD-bd_FR_type"/>
</dbReference>
<dbReference type="InterPro" id="IPR001709">
    <property type="entry name" value="Flavoprot_Pyr_Nucl_cyt_Rdtase"/>
</dbReference>
<dbReference type="InterPro" id="IPR039261">
    <property type="entry name" value="FNR_nucleotide-bd"/>
</dbReference>
<dbReference type="InterPro" id="IPR010205">
    <property type="entry name" value="NqrF"/>
</dbReference>
<dbReference type="InterPro" id="IPR001433">
    <property type="entry name" value="OxRdtase_FAD/NAD-bd"/>
</dbReference>
<dbReference type="InterPro" id="IPR017938">
    <property type="entry name" value="Riboflavin_synthase-like_b-brl"/>
</dbReference>
<dbReference type="NCBIfam" id="TIGR01941">
    <property type="entry name" value="nqrF"/>
    <property type="match status" value="1"/>
</dbReference>
<dbReference type="PANTHER" id="PTHR43644">
    <property type="entry name" value="NA(+)-TRANSLOCATING NADH-QUINONE REDUCTASE SUBUNIT"/>
    <property type="match status" value="1"/>
</dbReference>
<dbReference type="PANTHER" id="PTHR43644:SF1">
    <property type="entry name" value="NAD(P)H-FLAVIN REDUCTASE"/>
    <property type="match status" value="1"/>
</dbReference>
<dbReference type="Pfam" id="PF00970">
    <property type="entry name" value="FAD_binding_6"/>
    <property type="match status" value="1"/>
</dbReference>
<dbReference type="Pfam" id="PF00111">
    <property type="entry name" value="Fer2"/>
    <property type="match status" value="1"/>
</dbReference>
<dbReference type="Pfam" id="PF00175">
    <property type="entry name" value="NAD_binding_1"/>
    <property type="match status" value="1"/>
</dbReference>
<dbReference type="PIRSF" id="PIRSF000044">
    <property type="entry name" value="Cis_Diol_DH_RD"/>
    <property type="match status" value="1"/>
</dbReference>
<dbReference type="PRINTS" id="PR00371">
    <property type="entry name" value="FPNCR"/>
</dbReference>
<dbReference type="SUPFAM" id="SSF54292">
    <property type="entry name" value="2Fe-2S ferredoxin-like"/>
    <property type="match status" value="1"/>
</dbReference>
<dbReference type="SUPFAM" id="SSF52343">
    <property type="entry name" value="Ferredoxin reductase-like, C-terminal NADP-linked domain"/>
    <property type="match status" value="1"/>
</dbReference>
<dbReference type="SUPFAM" id="SSF63380">
    <property type="entry name" value="Riboflavin synthase domain-like"/>
    <property type="match status" value="1"/>
</dbReference>
<dbReference type="PROSITE" id="PS51085">
    <property type="entry name" value="2FE2S_FER_2"/>
    <property type="match status" value="1"/>
</dbReference>
<dbReference type="PROSITE" id="PS51384">
    <property type="entry name" value="FAD_FR"/>
    <property type="match status" value="1"/>
</dbReference>
<keyword id="KW-0001">2Fe-2S</keyword>
<keyword id="KW-0997">Cell inner membrane</keyword>
<keyword id="KW-1003">Cell membrane</keyword>
<keyword id="KW-0274">FAD</keyword>
<keyword id="KW-0285">Flavoprotein</keyword>
<keyword id="KW-0406">Ion transport</keyword>
<keyword id="KW-0408">Iron</keyword>
<keyword id="KW-0411">Iron-sulfur</keyword>
<keyword id="KW-0472">Membrane</keyword>
<keyword id="KW-0479">Metal-binding</keyword>
<keyword id="KW-0520">NAD</keyword>
<keyword id="KW-0915">Sodium</keyword>
<keyword id="KW-0739">Sodium transport</keyword>
<keyword id="KW-1278">Translocase</keyword>
<keyword id="KW-0812">Transmembrane</keyword>
<keyword id="KW-1133">Transmembrane helix</keyword>
<keyword id="KW-0813">Transport</keyword>
<keyword id="KW-0830">Ubiquinone</keyword>
<accession>Q0I5Y1</accession>
<reference key="1">
    <citation type="journal article" date="2007" name="J. Bacteriol.">
        <title>Complete genome sequence of Haemophilus somnus (Histophilus somni) strain 129Pt and comparison to Haemophilus ducreyi 35000HP and Haemophilus influenzae Rd.</title>
        <authorList>
            <person name="Challacombe J.F."/>
            <person name="Duncan A.J."/>
            <person name="Brettin T.S."/>
            <person name="Bruce D."/>
            <person name="Chertkov O."/>
            <person name="Detter J.C."/>
            <person name="Han C.S."/>
            <person name="Misra M."/>
            <person name="Richardson P."/>
            <person name="Tapia R."/>
            <person name="Thayer N."/>
            <person name="Xie G."/>
            <person name="Inzana T.J."/>
        </authorList>
    </citation>
    <scope>NUCLEOTIDE SEQUENCE [LARGE SCALE GENOMIC DNA]</scope>
    <source>
        <strain>129Pt</strain>
    </source>
</reference>
<sequence length="407" mass="45592">MEITLGIAMFTVIVLALAVLILFAKSKLVNSGDITIEINDDPGKAINLPAGGKLLGALANKGIFVSSACGGGGSCGQCIVKVTEGGGDILPTELSHISKREAKEGYRLSCQVNVKNSMKIELPEEVFGVKKWECTVISNDNKATFIKELKLQIPEGEEVPFRAGGYIQIEAEPHTVHYKDFDIPKEYHEDWDKFDLWRYTSKVDEHIIRAYSMASYPEEKGIIMLNVRIATPPPRNPDVPPGQMSSYIWSLKEGDKVTISGPFGEFFAKETDNEMVFIGGGAGMAPMRSHIFDQLKRLKSKRKMSFWYGARSKREMFYVEDFDMLQAENDNFVWHVALSDPLPEDDWDGYTGFIHNVLYENYLKNHEAPEDCEYYMCGPPVMNAAVIKMLKDLGVEDENILLDDFGG</sequence>
<comment type="function">
    <text evidence="1">NQR complex catalyzes the reduction of ubiquinone-1 to ubiquinol by two successive reactions, coupled with the transport of Na(+) ions from the cytoplasm to the periplasm. The first step is catalyzed by NqrF, which accepts electrons from NADH and reduces ubiquinone-1 to ubisemiquinone by a one-electron transfer pathway.</text>
</comment>
<comment type="catalytic activity">
    <reaction evidence="1">
        <text>a ubiquinone + n Na(+)(in) + NADH + H(+) = a ubiquinol + n Na(+)(out) + NAD(+)</text>
        <dbReference type="Rhea" id="RHEA:47748"/>
        <dbReference type="Rhea" id="RHEA-COMP:9565"/>
        <dbReference type="Rhea" id="RHEA-COMP:9566"/>
        <dbReference type="ChEBI" id="CHEBI:15378"/>
        <dbReference type="ChEBI" id="CHEBI:16389"/>
        <dbReference type="ChEBI" id="CHEBI:17976"/>
        <dbReference type="ChEBI" id="CHEBI:29101"/>
        <dbReference type="ChEBI" id="CHEBI:57540"/>
        <dbReference type="ChEBI" id="CHEBI:57945"/>
        <dbReference type="EC" id="7.2.1.1"/>
    </reaction>
</comment>
<comment type="cofactor">
    <cofactor evidence="1">
        <name>[2Fe-2S] cluster</name>
        <dbReference type="ChEBI" id="CHEBI:190135"/>
    </cofactor>
    <text evidence="1">Binds 1 [2Fe-2S] cluster.</text>
</comment>
<comment type="cofactor">
    <cofactor evidence="1">
        <name>FAD</name>
        <dbReference type="ChEBI" id="CHEBI:57692"/>
    </cofactor>
</comment>
<comment type="subunit">
    <text evidence="1">Composed of six subunits; NqrA, NqrB, NqrC, NqrD, NqrE and NqrF.</text>
</comment>
<comment type="subcellular location">
    <subcellularLocation>
        <location evidence="1">Cell inner membrane</location>
        <topology evidence="1">Single-pass membrane protein</topology>
    </subcellularLocation>
</comment>
<comment type="similarity">
    <text evidence="1">Belongs to the NqrF family.</text>
</comment>
<organism>
    <name type="scientific">Histophilus somni (strain 129Pt)</name>
    <name type="common">Haemophilus somnus</name>
    <dbReference type="NCBI Taxonomy" id="205914"/>
    <lineage>
        <taxon>Bacteria</taxon>
        <taxon>Pseudomonadati</taxon>
        <taxon>Pseudomonadota</taxon>
        <taxon>Gammaproteobacteria</taxon>
        <taxon>Pasteurellales</taxon>
        <taxon>Pasteurellaceae</taxon>
        <taxon>Histophilus</taxon>
    </lineage>
</organism>
<protein>
    <recommendedName>
        <fullName evidence="1">Na(+)-translocating NADH-quinone reductase subunit F</fullName>
        <shortName evidence="1">Na(+)-NQR subunit F</shortName>
        <shortName evidence="1">Na(+)-translocating NQR subunit F</shortName>
        <ecNumber evidence="1">7.2.1.1</ecNumber>
    </recommendedName>
    <alternativeName>
        <fullName evidence="1">NQR complex subunit F</fullName>
    </alternativeName>
    <alternativeName>
        <fullName evidence="1">NQR-1 subunit F</fullName>
    </alternativeName>
</protein>
<gene>
    <name evidence="1" type="primary">nqrF</name>
    <name type="ordered locus">HS_1688</name>
</gene>